<accession>Q96S65</accession>
<accession>Q69YY5</accession>
<name>CSRN1_HUMAN</name>
<dbReference type="EMBL" id="AB053121">
    <property type="protein sequence ID" value="BAB61065.1"/>
    <property type="molecule type" value="mRNA"/>
</dbReference>
<dbReference type="EMBL" id="AB063301">
    <property type="protein sequence ID" value="BAB79450.1"/>
    <property type="molecule type" value="mRNA"/>
</dbReference>
<dbReference type="EMBL" id="AC092053">
    <property type="status" value="NOT_ANNOTATED_CDS"/>
    <property type="molecule type" value="Genomic_DNA"/>
</dbReference>
<dbReference type="EMBL" id="BC038949">
    <property type="protein sequence ID" value="AAH38949.1"/>
    <property type="molecule type" value="mRNA"/>
</dbReference>
<dbReference type="EMBL" id="AL117565">
    <property type="protein sequence ID" value="CAH10719.1"/>
    <property type="molecule type" value="mRNA"/>
</dbReference>
<dbReference type="CCDS" id="CCDS2682.1"/>
<dbReference type="RefSeq" id="NP_001307489.1">
    <property type="nucleotide sequence ID" value="NM_001320560.2"/>
</dbReference>
<dbReference type="RefSeq" id="NP_149016.2">
    <property type="nucleotide sequence ID" value="NM_033027.4"/>
</dbReference>
<dbReference type="RefSeq" id="XP_016862537.1">
    <property type="nucleotide sequence ID" value="XM_017007048.1"/>
</dbReference>
<dbReference type="RefSeq" id="XP_047304679.1">
    <property type="nucleotide sequence ID" value="XM_047448723.1"/>
</dbReference>
<dbReference type="RefSeq" id="XP_047304680.1">
    <property type="nucleotide sequence ID" value="XM_047448724.1"/>
</dbReference>
<dbReference type="BioGRID" id="122227">
    <property type="interactions" value="76"/>
</dbReference>
<dbReference type="FunCoup" id="Q96S65">
    <property type="interactions" value="858"/>
</dbReference>
<dbReference type="IntAct" id="Q96S65">
    <property type="interactions" value="18"/>
</dbReference>
<dbReference type="STRING" id="9606.ENSP00000273153"/>
<dbReference type="iPTMnet" id="Q96S65"/>
<dbReference type="PhosphoSitePlus" id="Q96S65"/>
<dbReference type="BioMuta" id="CSRNP1"/>
<dbReference type="DMDM" id="308153432"/>
<dbReference type="jPOST" id="Q96S65"/>
<dbReference type="MassIVE" id="Q96S65"/>
<dbReference type="PaxDb" id="9606-ENSP00000273153"/>
<dbReference type="PeptideAtlas" id="Q96S65"/>
<dbReference type="ProteomicsDB" id="78076"/>
<dbReference type="Antibodypedia" id="12159">
    <property type="antibodies" value="150 antibodies from 29 providers"/>
</dbReference>
<dbReference type="DNASU" id="64651"/>
<dbReference type="Ensembl" id="ENST00000273153.10">
    <property type="protein sequence ID" value="ENSP00000273153.5"/>
    <property type="gene ID" value="ENSG00000144655.15"/>
</dbReference>
<dbReference type="Ensembl" id="ENST00000514182.1">
    <property type="protein sequence ID" value="ENSP00000422532.1"/>
    <property type="gene ID" value="ENSG00000144655.15"/>
</dbReference>
<dbReference type="GeneID" id="64651"/>
<dbReference type="KEGG" id="hsa:64651"/>
<dbReference type="MANE-Select" id="ENST00000273153.10">
    <property type="protein sequence ID" value="ENSP00000273153.5"/>
    <property type="RefSeq nucleotide sequence ID" value="NM_033027.4"/>
    <property type="RefSeq protein sequence ID" value="NP_149016.2"/>
</dbReference>
<dbReference type="UCSC" id="uc003cjg.4">
    <property type="organism name" value="human"/>
</dbReference>
<dbReference type="AGR" id="HGNC:14300"/>
<dbReference type="CTD" id="64651"/>
<dbReference type="DisGeNET" id="64651"/>
<dbReference type="GeneCards" id="CSRNP1"/>
<dbReference type="HGNC" id="HGNC:14300">
    <property type="gene designation" value="CSRNP1"/>
</dbReference>
<dbReference type="HPA" id="ENSG00000144655">
    <property type="expression patterns" value="Tissue enhanced (bone)"/>
</dbReference>
<dbReference type="MIM" id="606458">
    <property type="type" value="gene"/>
</dbReference>
<dbReference type="neXtProt" id="NX_Q96S65"/>
<dbReference type="OpenTargets" id="ENSG00000144655"/>
<dbReference type="PharmGKB" id="PA25200"/>
<dbReference type="VEuPathDB" id="HostDB:ENSG00000144655"/>
<dbReference type="eggNOG" id="KOG3813">
    <property type="taxonomic scope" value="Eukaryota"/>
</dbReference>
<dbReference type="GeneTree" id="ENSGT00950000183072"/>
<dbReference type="HOGENOM" id="CLU_034103_2_2_1"/>
<dbReference type="InParanoid" id="Q96S65"/>
<dbReference type="OMA" id="CGCDCRE"/>
<dbReference type="OrthoDB" id="5946974at2759"/>
<dbReference type="PAN-GO" id="Q96S65">
    <property type="GO annotations" value="4 GO annotations based on evolutionary models"/>
</dbReference>
<dbReference type="PhylomeDB" id="Q96S65"/>
<dbReference type="TreeFam" id="TF323969"/>
<dbReference type="PathwayCommons" id="Q96S65"/>
<dbReference type="SignaLink" id="Q96S65"/>
<dbReference type="BioGRID-ORCS" id="64651">
    <property type="hits" value="21 hits in 1165 CRISPR screens"/>
</dbReference>
<dbReference type="ChiTaRS" id="CSRNP1">
    <property type="organism name" value="human"/>
</dbReference>
<dbReference type="GenomeRNAi" id="64651"/>
<dbReference type="Pharos" id="Q96S65">
    <property type="development level" value="Tbio"/>
</dbReference>
<dbReference type="PRO" id="PR:Q96S65"/>
<dbReference type="Proteomes" id="UP000005640">
    <property type="component" value="Chromosome 3"/>
</dbReference>
<dbReference type="RNAct" id="Q96S65">
    <property type="molecule type" value="protein"/>
</dbReference>
<dbReference type="Bgee" id="ENSG00000144655">
    <property type="expression patterns" value="Expressed in mucosa of stomach and 166 other cell types or tissues"/>
</dbReference>
<dbReference type="ExpressionAtlas" id="Q96S65">
    <property type="expression patterns" value="baseline and differential"/>
</dbReference>
<dbReference type="GO" id="GO:0000785">
    <property type="term" value="C:chromatin"/>
    <property type="evidence" value="ECO:0000247"/>
    <property type="project" value="NTNU_SB"/>
</dbReference>
<dbReference type="GO" id="GO:0005634">
    <property type="term" value="C:nucleus"/>
    <property type="evidence" value="ECO:0000250"/>
    <property type="project" value="UniProtKB"/>
</dbReference>
<dbReference type="GO" id="GO:0001228">
    <property type="term" value="F:DNA-binding transcription activator activity, RNA polymerase II-specific"/>
    <property type="evidence" value="ECO:0007669"/>
    <property type="project" value="Ensembl"/>
</dbReference>
<dbReference type="GO" id="GO:0003700">
    <property type="term" value="F:DNA-binding transcription factor activity"/>
    <property type="evidence" value="ECO:0000250"/>
    <property type="project" value="UniProtKB"/>
</dbReference>
<dbReference type="GO" id="GO:0000981">
    <property type="term" value="F:DNA-binding transcription factor activity, RNA polymerase II-specific"/>
    <property type="evidence" value="ECO:0000247"/>
    <property type="project" value="NTNU_SB"/>
</dbReference>
<dbReference type="GO" id="GO:0043565">
    <property type="term" value="F:sequence-specific DNA binding"/>
    <property type="evidence" value="ECO:0000318"/>
    <property type="project" value="GO_Central"/>
</dbReference>
<dbReference type="GO" id="GO:0006915">
    <property type="term" value="P:apoptotic process"/>
    <property type="evidence" value="ECO:0000303"/>
    <property type="project" value="UniProtKB"/>
</dbReference>
<dbReference type="GO" id="GO:0060325">
    <property type="term" value="P:face morphogenesis"/>
    <property type="evidence" value="ECO:0007669"/>
    <property type="project" value="Ensembl"/>
</dbReference>
<dbReference type="GO" id="GO:0048008">
    <property type="term" value="P:platelet-derived growth factor receptor signaling pathway"/>
    <property type="evidence" value="ECO:0007669"/>
    <property type="project" value="Ensembl"/>
</dbReference>
<dbReference type="GO" id="GO:0045944">
    <property type="term" value="P:positive regulation of transcription by RNA polymerase II"/>
    <property type="evidence" value="ECO:0000250"/>
    <property type="project" value="UniProtKB"/>
</dbReference>
<dbReference type="GO" id="GO:0009791">
    <property type="term" value="P:post-embryonic development"/>
    <property type="evidence" value="ECO:0007669"/>
    <property type="project" value="Ensembl"/>
</dbReference>
<dbReference type="GO" id="GO:0006357">
    <property type="term" value="P:regulation of transcription by RNA polymerase II"/>
    <property type="evidence" value="ECO:0000318"/>
    <property type="project" value="GO_Central"/>
</dbReference>
<dbReference type="GO" id="GO:0060021">
    <property type="term" value="P:roof of mouth development"/>
    <property type="evidence" value="ECO:0007669"/>
    <property type="project" value="Ensembl"/>
</dbReference>
<dbReference type="GO" id="GO:0048705">
    <property type="term" value="P:skeletal system morphogenesis"/>
    <property type="evidence" value="ECO:0007669"/>
    <property type="project" value="Ensembl"/>
</dbReference>
<dbReference type="InterPro" id="IPR031972">
    <property type="entry name" value="CSRNP_N"/>
</dbReference>
<dbReference type="InterPro" id="IPR023260">
    <property type="entry name" value="Cys/Ser-rich_nuc_prot"/>
</dbReference>
<dbReference type="PANTHER" id="PTHR13580:SF10">
    <property type="entry name" value="CYSTEINE_SERINE-RICH NUCLEAR PROTEIN 1"/>
    <property type="match status" value="1"/>
</dbReference>
<dbReference type="PANTHER" id="PTHR13580">
    <property type="entry name" value="TGF-BETA INDUCED APOPTOSIS PROTEIN"/>
    <property type="match status" value="1"/>
</dbReference>
<dbReference type="Pfam" id="PF16019">
    <property type="entry name" value="CSRNP_N"/>
    <property type="match status" value="1"/>
</dbReference>
<dbReference type="PRINTS" id="PR02031">
    <property type="entry name" value="CYSSERRICHNP"/>
</dbReference>
<evidence type="ECO:0000250" key="1"/>
<evidence type="ECO:0000256" key="2">
    <source>
        <dbReference type="SAM" id="MobiDB-lite"/>
    </source>
</evidence>
<evidence type="ECO:0000269" key="3">
    <source>
    </source>
</evidence>
<evidence type="ECO:0000269" key="4">
    <source>
    </source>
</evidence>
<evidence type="ECO:0000269" key="5">
    <source ref="2"/>
</evidence>
<evidence type="ECO:0000305" key="6"/>
<reference key="1">
    <citation type="journal article" date="2001" name="Oncogene">
        <title>Identification of AXUD1, a novel human gene induced by AXIN1 and its reduced expression in human carcinomas of the lung, liver, colon and kidney.</title>
        <authorList>
            <person name="Ishiguro H."/>
            <person name="Tsunoda T."/>
            <person name="Tanaka T."/>
            <person name="Fujii Y."/>
            <person name="Nakamura Y."/>
            <person name="Furukawa Y."/>
        </authorList>
    </citation>
    <scope>NUCLEOTIDE SEQUENCE [MRNA]</scope>
    <scope>FUNCTION</scope>
    <scope>TISSUE SPECIFICITY</scope>
    <scope>VARIANT ILE-453</scope>
</reference>
<reference key="2">
    <citation type="submission" date="2001-06" db="EMBL/GenBank/DDBJ databases">
        <title>TGF-beta induced apoptosis protein 3 (TAIP-3).</title>
        <authorList>
            <person name="Akiyama N."/>
            <person name="Kondoh S."/>
        </authorList>
    </citation>
    <scope>NUCLEOTIDE SEQUENCE [MRNA]</scope>
    <scope>VARIANT ILE-453</scope>
</reference>
<reference key="3">
    <citation type="journal article" date="2006" name="Nature">
        <title>The DNA sequence, annotation and analysis of human chromosome 3.</title>
        <authorList>
            <person name="Muzny D.M."/>
            <person name="Scherer S.E."/>
            <person name="Kaul R."/>
            <person name="Wang J."/>
            <person name="Yu J."/>
            <person name="Sudbrak R."/>
            <person name="Buhay C.J."/>
            <person name="Chen R."/>
            <person name="Cree A."/>
            <person name="Ding Y."/>
            <person name="Dugan-Rocha S."/>
            <person name="Gill R."/>
            <person name="Gunaratne P."/>
            <person name="Harris R.A."/>
            <person name="Hawes A.C."/>
            <person name="Hernandez J."/>
            <person name="Hodgson A.V."/>
            <person name="Hume J."/>
            <person name="Jackson A."/>
            <person name="Khan Z.M."/>
            <person name="Kovar-Smith C."/>
            <person name="Lewis L.R."/>
            <person name="Lozado R.J."/>
            <person name="Metzker M.L."/>
            <person name="Milosavljevic A."/>
            <person name="Miner G.R."/>
            <person name="Morgan M.B."/>
            <person name="Nazareth L.V."/>
            <person name="Scott G."/>
            <person name="Sodergren E."/>
            <person name="Song X.-Z."/>
            <person name="Steffen D."/>
            <person name="Wei S."/>
            <person name="Wheeler D.A."/>
            <person name="Wright M.W."/>
            <person name="Worley K.C."/>
            <person name="Yuan Y."/>
            <person name="Zhang Z."/>
            <person name="Adams C.Q."/>
            <person name="Ansari-Lari M.A."/>
            <person name="Ayele M."/>
            <person name="Brown M.J."/>
            <person name="Chen G."/>
            <person name="Chen Z."/>
            <person name="Clendenning J."/>
            <person name="Clerc-Blankenburg K.P."/>
            <person name="Chen R."/>
            <person name="Chen Z."/>
            <person name="Davis C."/>
            <person name="Delgado O."/>
            <person name="Dinh H.H."/>
            <person name="Dong W."/>
            <person name="Draper H."/>
            <person name="Ernst S."/>
            <person name="Fu G."/>
            <person name="Gonzalez-Garay M.L."/>
            <person name="Garcia D.K."/>
            <person name="Gillett W."/>
            <person name="Gu J."/>
            <person name="Hao B."/>
            <person name="Haugen E."/>
            <person name="Havlak P."/>
            <person name="He X."/>
            <person name="Hennig S."/>
            <person name="Hu S."/>
            <person name="Huang W."/>
            <person name="Jackson L.R."/>
            <person name="Jacob L.S."/>
            <person name="Kelly S.H."/>
            <person name="Kube M."/>
            <person name="Levy R."/>
            <person name="Li Z."/>
            <person name="Liu B."/>
            <person name="Liu J."/>
            <person name="Liu W."/>
            <person name="Lu J."/>
            <person name="Maheshwari M."/>
            <person name="Nguyen B.-V."/>
            <person name="Okwuonu G.O."/>
            <person name="Palmeiri A."/>
            <person name="Pasternak S."/>
            <person name="Perez L.M."/>
            <person name="Phelps K.A."/>
            <person name="Plopper F.J."/>
            <person name="Qiang B."/>
            <person name="Raymond C."/>
            <person name="Rodriguez R."/>
            <person name="Saenphimmachak C."/>
            <person name="Santibanez J."/>
            <person name="Shen H."/>
            <person name="Shen Y."/>
            <person name="Subramanian S."/>
            <person name="Tabor P.E."/>
            <person name="Verduzco D."/>
            <person name="Waldron L."/>
            <person name="Wang J."/>
            <person name="Wang J."/>
            <person name="Wang Q."/>
            <person name="Williams G.A."/>
            <person name="Wong G.K.-S."/>
            <person name="Yao Z."/>
            <person name="Zhang J."/>
            <person name="Zhang X."/>
            <person name="Zhao G."/>
            <person name="Zhou J."/>
            <person name="Zhou Y."/>
            <person name="Nelson D."/>
            <person name="Lehrach H."/>
            <person name="Reinhardt R."/>
            <person name="Naylor S.L."/>
            <person name="Yang H."/>
            <person name="Olson M."/>
            <person name="Weinstock G."/>
            <person name="Gibbs R.A."/>
        </authorList>
    </citation>
    <scope>NUCLEOTIDE SEQUENCE [LARGE SCALE GENOMIC DNA]</scope>
</reference>
<reference key="4">
    <citation type="journal article" date="2004" name="Genome Res.">
        <title>The status, quality, and expansion of the NIH full-length cDNA project: the Mammalian Gene Collection (MGC).</title>
        <authorList>
            <consortium name="The MGC Project Team"/>
        </authorList>
    </citation>
    <scope>NUCLEOTIDE SEQUENCE [LARGE SCALE MRNA]</scope>
    <scope>VARIANT ILE-453</scope>
    <source>
        <tissue>Skin</tissue>
    </source>
</reference>
<reference key="5">
    <citation type="journal article" date="2007" name="BMC Genomics">
        <title>The full-ORF clone resource of the German cDNA consortium.</title>
        <authorList>
            <person name="Bechtel S."/>
            <person name="Rosenfelder H."/>
            <person name="Duda A."/>
            <person name="Schmidt C.P."/>
            <person name="Ernst U."/>
            <person name="Wellenreuther R."/>
            <person name="Mehrle A."/>
            <person name="Schuster C."/>
            <person name="Bahr A."/>
            <person name="Bloecker H."/>
            <person name="Heubner D."/>
            <person name="Hoerlein A."/>
            <person name="Michel G."/>
            <person name="Wedler H."/>
            <person name="Koehrer K."/>
            <person name="Ottenwaelder B."/>
            <person name="Poustka A."/>
            <person name="Wiemann S."/>
            <person name="Schupp I."/>
        </authorList>
    </citation>
    <scope>NUCLEOTIDE SEQUENCE [LARGE SCALE MRNA] OF 530-589</scope>
    <source>
        <tissue>Kidney</tissue>
    </source>
</reference>
<feature type="chain" id="PRO_0000114786" description="Cysteine/serine-rich nuclear protein 1">
    <location>
        <begin position="1"/>
        <end position="589"/>
    </location>
</feature>
<feature type="region of interest" description="Disordered" evidence="2">
    <location>
        <begin position="1"/>
        <end position="62"/>
    </location>
</feature>
<feature type="region of interest" description="Disordered" evidence="2">
    <location>
        <begin position="309"/>
        <end position="388"/>
    </location>
</feature>
<feature type="compositionally biased region" description="Low complexity" evidence="2">
    <location>
        <begin position="17"/>
        <end position="41"/>
    </location>
</feature>
<feature type="compositionally biased region" description="Low complexity" evidence="2">
    <location>
        <begin position="345"/>
        <end position="368"/>
    </location>
</feature>
<feature type="sequence variant" id="VAR_055100" description="In dbSNP:rs1274958." evidence="3 4 5">
    <original>V</original>
    <variation>I</variation>
    <location>
        <position position="453"/>
    </location>
</feature>
<protein>
    <recommendedName>
        <fullName>Cysteine/serine-rich nuclear protein 1</fullName>
        <shortName>CSRNP-1</shortName>
    </recommendedName>
    <alternativeName>
        <fullName>Axin-1 up-regulated gene 1 protein</fullName>
    </alternativeName>
    <alternativeName>
        <fullName>Protein URAX1</fullName>
    </alternativeName>
    <alternativeName>
        <fullName>TGF-beta-induced apoptosis protein 3</fullName>
        <shortName>TAIP-3</shortName>
    </alternativeName>
</protein>
<comment type="function">
    <text evidence="1 3">Binds to the consensus sequence 5'-AGAGTG-3' and has transcriptional activator activity (By similarity). May have a tumor-suppressor function. May play a role in apoptosis.</text>
</comment>
<comment type="interaction">
    <interactant intactId="EBI-4311573">
        <id>Q96S65</id>
    </interactant>
    <interactant intactId="EBI-745213">
        <id>P29972</id>
        <label>AQP1</label>
    </interactant>
    <organismsDiffer>false</organismsDiffer>
    <experiments>3</experiments>
</comment>
<comment type="interaction">
    <interactant intactId="EBI-4311573">
        <id>Q96S65</id>
    </interactant>
    <interactant intactId="EBI-348259">
        <id>Q96EZ8</id>
        <label>MCRS1</label>
    </interactant>
    <organismsDiffer>false</organismsDiffer>
    <experiments>4</experiments>
</comment>
<comment type="interaction">
    <interactant intactId="EBI-4311573">
        <id>Q96S65</id>
    </interactant>
    <interactant intactId="EBI-357253">
        <id>P62136</id>
        <label>PPP1CA</label>
    </interactant>
    <organismsDiffer>false</organismsDiffer>
    <experiments>9</experiments>
</comment>
<comment type="interaction">
    <interactant intactId="EBI-4311573">
        <id>Q96S65</id>
    </interactant>
    <interactant intactId="EBI-352350">
        <id>P62140</id>
        <label>PPP1CB</label>
    </interactant>
    <organismsDiffer>false</organismsDiffer>
    <experiments>4</experiments>
</comment>
<comment type="interaction">
    <interactant intactId="EBI-4311573">
        <id>Q96S65</id>
    </interactant>
    <interactant intactId="EBI-356283">
        <id>P36873</id>
        <label>PPP1CC</label>
    </interactant>
    <organismsDiffer>false</organismsDiffer>
    <experiments>4</experiments>
</comment>
<comment type="interaction">
    <interactant intactId="EBI-4311573">
        <id>Q96S65</id>
    </interactant>
    <interactant intactId="EBI-2798416">
        <id>Q99633</id>
        <label>PRPF18</label>
    </interactant>
    <organismsDiffer>false</organismsDiffer>
    <experiments>3</experiments>
</comment>
<comment type="interaction">
    <interactant intactId="EBI-4311573">
        <id>Q96S65</id>
    </interactant>
    <interactant intactId="EBI-954696">
        <id>Q8N8B7</id>
        <label>TCEANC</label>
    </interactant>
    <organismsDiffer>false</organismsDiffer>
    <experiments>3</experiments>
</comment>
<comment type="interaction">
    <interactant intactId="EBI-4311573">
        <id>Q96S65</id>
    </interactant>
    <interactant intactId="EBI-11955057">
        <id>Q8N8B7-2</id>
        <label>TCEANC</label>
    </interactant>
    <organismsDiffer>false</organismsDiffer>
    <experiments>3</experiments>
</comment>
<comment type="interaction">
    <interactant intactId="EBI-4311573">
        <id>Q96S65</id>
    </interactant>
    <interactant intactId="EBI-740727">
        <id>Q8TAU3</id>
        <label>ZNF417</label>
    </interactant>
    <organismsDiffer>false</organismsDiffer>
    <experiments>3</experiments>
</comment>
<comment type="interaction">
    <interactant intactId="EBI-4311573">
        <id>Q96S65</id>
    </interactant>
    <interactant intactId="EBI-6427977">
        <id>Q96SQ5</id>
        <label>ZNF587</label>
    </interactant>
    <organismsDiffer>false</organismsDiffer>
    <experiments>3</experiments>
</comment>
<comment type="subcellular location">
    <subcellularLocation>
        <location evidence="1">Nucleus</location>
    </subcellularLocation>
</comment>
<comment type="tissue specificity">
    <text evidence="3">Ubiquitous. Most abundantly expressed in lung, placenta, skeletal muscle, pancreas and leukocyte. Frequently down-regulated in lung, kidney, liver and colon cancers compared with their corresponding normal tissues.</text>
</comment>
<comment type="similarity">
    <text evidence="6">Belongs to the AXUD1 family.</text>
</comment>
<keyword id="KW-0010">Activator</keyword>
<keyword id="KW-0053">Apoptosis</keyword>
<keyword id="KW-0238">DNA-binding</keyword>
<keyword id="KW-0539">Nucleus</keyword>
<keyword id="KW-1267">Proteomics identification</keyword>
<keyword id="KW-1185">Reference proteome</keyword>
<keyword id="KW-0804">Transcription</keyword>
<keyword id="KW-0805">Transcription regulation</keyword>
<gene>
    <name type="primary">CSRNP1</name>
    <name type="synonym">AXUD1</name>
    <name type="synonym">TAIP3</name>
</gene>
<proteinExistence type="evidence at protein level"/>
<organism>
    <name type="scientific">Homo sapiens</name>
    <name type="common">Human</name>
    <dbReference type="NCBI Taxonomy" id="9606"/>
    <lineage>
        <taxon>Eukaryota</taxon>
        <taxon>Metazoa</taxon>
        <taxon>Chordata</taxon>
        <taxon>Craniata</taxon>
        <taxon>Vertebrata</taxon>
        <taxon>Euteleostomi</taxon>
        <taxon>Mammalia</taxon>
        <taxon>Eutheria</taxon>
        <taxon>Euarchontoglires</taxon>
        <taxon>Primates</taxon>
        <taxon>Haplorrhini</taxon>
        <taxon>Catarrhini</taxon>
        <taxon>Hominidae</taxon>
        <taxon>Homo</taxon>
    </lineage>
</organism>
<sequence>MTGLLKRKFDQLDEDNSSVSSSSSSSGCQSRSCSPSSSVSRAWDSEEEGPWDQMPLPDRDFCGPRSFTPLSILKRARRERPGRVAFDGITVFYFPRCQGFTSVPSRGGCTLGMALRHSACRRFSLAEFAQEQARARHEKLRQRLKEEKLEMLQWKLSAAGVPQAEAGLPPVVDAIDDASVEEDLAVAVAGGRLEEVSFLQPYPARRRRALLRASGVRRIDREEKRELQALRQSREDCGCHCDRICDPETCSCSLAGIKCQMDHTAFPCGCCREGCENPMGRVEFNQARVQTHFIHTLTRLQLEQEAESFRELEAPAQGSPPSPGEEALVPTFPLAKPPMNNELGDNSCSSDMTDSSTASSSASGTSEAPDCPTHPGLPGPGFQPGVDDDSLARILSFSDSDFGGEEEEEEEGSVGNLDNLSCFHPADIFGTSDPGGLASWTHSYSGCSFTSGVLDENANLDASCFLNGGLEGSREGSLPGTSVPPSMDAGRSSSVDLSLSSCDSFELLQALPDYSLGPHYTSQKVSDSLDNIEAPHFPLPGLSPPGDASSCFLESLMGFSEPAAEALDPFIDSQFEDTVPASLMEPVPV</sequence>